<dbReference type="EC" id="2.1.1.222" evidence="1"/>
<dbReference type="EC" id="2.1.1.64" evidence="1"/>
<dbReference type="EMBL" id="CP000738">
    <property type="protein sequence ID" value="ABR61336.1"/>
    <property type="molecule type" value="Genomic_DNA"/>
</dbReference>
<dbReference type="RefSeq" id="WP_012066727.1">
    <property type="nucleotide sequence ID" value="NC_009636.1"/>
</dbReference>
<dbReference type="RefSeq" id="YP_001328171.1">
    <property type="nucleotide sequence ID" value="NC_009636.1"/>
</dbReference>
<dbReference type="SMR" id="A6UCF6"/>
<dbReference type="STRING" id="366394.Smed_2506"/>
<dbReference type="GeneID" id="61611967"/>
<dbReference type="KEGG" id="smd:Smed_2506"/>
<dbReference type="PATRIC" id="fig|366394.8.peg.5696"/>
<dbReference type="eggNOG" id="COG2227">
    <property type="taxonomic scope" value="Bacteria"/>
</dbReference>
<dbReference type="HOGENOM" id="CLU_042432_0_0_5"/>
<dbReference type="OrthoDB" id="9801538at2"/>
<dbReference type="UniPathway" id="UPA00232"/>
<dbReference type="Proteomes" id="UP000001108">
    <property type="component" value="Chromosome"/>
</dbReference>
<dbReference type="GO" id="GO:0102208">
    <property type="term" value="F:2-polyprenyl-6-hydroxyphenol methylase activity"/>
    <property type="evidence" value="ECO:0007669"/>
    <property type="project" value="UniProtKB-EC"/>
</dbReference>
<dbReference type="GO" id="GO:0061542">
    <property type="term" value="F:3-demethylubiquinol 3-O-methyltransferase activity"/>
    <property type="evidence" value="ECO:0007669"/>
    <property type="project" value="UniProtKB-UniRule"/>
</dbReference>
<dbReference type="GO" id="GO:0010420">
    <property type="term" value="F:polyprenyldihydroxybenzoate methyltransferase activity"/>
    <property type="evidence" value="ECO:0007669"/>
    <property type="project" value="InterPro"/>
</dbReference>
<dbReference type="GO" id="GO:0032259">
    <property type="term" value="P:methylation"/>
    <property type="evidence" value="ECO:0007669"/>
    <property type="project" value="UniProtKB-KW"/>
</dbReference>
<dbReference type="CDD" id="cd02440">
    <property type="entry name" value="AdoMet_MTases"/>
    <property type="match status" value="1"/>
</dbReference>
<dbReference type="Gene3D" id="3.40.50.150">
    <property type="entry name" value="Vaccinia Virus protein VP39"/>
    <property type="match status" value="1"/>
</dbReference>
<dbReference type="HAMAP" id="MF_00472">
    <property type="entry name" value="UbiG"/>
    <property type="match status" value="1"/>
</dbReference>
<dbReference type="InterPro" id="IPR013216">
    <property type="entry name" value="Methyltransf_11"/>
</dbReference>
<dbReference type="InterPro" id="IPR029063">
    <property type="entry name" value="SAM-dependent_MTases_sf"/>
</dbReference>
<dbReference type="InterPro" id="IPR010233">
    <property type="entry name" value="UbiG_MeTrfase"/>
</dbReference>
<dbReference type="NCBIfam" id="TIGR01983">
    <property type="entry name" value="UbiG"/>
    <property type="match status" value="1"/>
</dbReference>
<dbReference type="PANTHER" id="PTHR43464">
    <property type="entry name" value="METHYLTRANSFERASE"/>
    <property type="match status" value="1"/>
</dbReference>
<dbReference type="PANTHER" id="PTHR43464:SF19">
    <property type="entry name" value="UBIQUINONE BIOSYNTHESIS O-METHYLTRANSFERASE, MITOCHONDRIAL"/>
    <property type="match status" value="1"/>
</dbReference>
<dbReference type="Pfam" id="PF08241">
    <property type="entry name" value="Methyltransf_11"/>
    <property type="match status" value="1"/>
</dbReference>
<dbReference type="SUPFAM" id="SSF53335">
    <property type="entry name" value="S-adenosyl-L-methionine-dependent methyltransferases"/>
    <property type="match status" value="1"/>
</dbReference>
<reference key="1">
    <citation type="submission" date="2007-06" db="EMBL/GenBank/DDBJ databases">
        <title>Complete sequence of Sinorhizobium medicae WSM419 chromosome.</title>
        <authorList>
            <consortium name="US DOE Joint Genome Institute"/>
            <person name="Copeland A."/>
            <person name="Lucas S."/>
            <person name="Lapidus A."/>
            <person name="Barry K."/>
            <person name="Glavina del Rio T."/>
            <person name="Dalin E."/>
            <person name="Tice H."/>
            <person name="Pitluck S."/>
            <person name="Chain P."/>
            <person name="Malfatti S."/>
            <person name="Shin M."/>
            <person name="Vergez L."/>
            <person name="Schmutz J."/>
            <person name="Larimer F."/>
            <person name="Land M."/>
            <person name="Hauser L."/>
            <person name="Kyrpides N."/>
            <person name="Mikhailova N."/>
            <person name="Reeve W.G."/>
            <person name="Richardson P."/>
        </authorList>
    </citation>
    <scope>NUCLEOTIDE SEQUENCE [LARGE SCALE GENOMIC DNA]</scope>
    <source>
        <strain>WSM419</strain>
    </source>
</reference>
<protein>
    <recommendedName>
        <fullName evidence="1">Ubiquinone biosynthesis O-methyltransferase</fullName>
    </recommendedName>
    <alternativeName>
        <fullName evidence="1">2-polyprenyl-6-hydroxyphenol methylase</fullName>
        <ecNumber evidence="1">2.1.1.222</ecNumber>
    </alternativeName>
    <alternativeName>
        <fullName evidence="1">3-demethylubiquinone 3-O-methyltransferase</fullName>
        <ecNumber evidence="1">2.1.1.64</ecNumber>
    </alternativeName>
</protein>
<accession>A6UCF6</accession>
<organism>
    <name type="scientific">Sinorhizobium medicae (strain WSM419)</name>
    <name type="common">Ensifer medicae</name>
    <dbReference type="NCBI Taxonomy" id="366394"/>
    <lineage>
        <taxon>Bacteria</taxon>
        <taxon>Pseudomonadati</taxon>
        <taxon>Pseudomonadota</taxon>
        <taxon>Alphaproteobacteria</taxon>
        <taxon>Hyphomicrobiales</taxon>
        <taxon>Rhizobiaceae</taxon>
        <taxon>Sinorhizobium/Ensifer group</taxon>
        <taxon>Sinorhizobium</taxon>
    </lineage>
</organism>
<evidence type="ECO:0000255" key="1">
    <source>
        <dbReference type="HAMAP-Rule" id="MF_00472"/>
    </source>
</evidence>
<keyword id="KW-0489">Methyltransferase</keyword>
<keyword id="KW-0949">S-adenosyl-L-methionine</keyword>
<keyword id="KW-0808">Transferase</keyword>
<keyword id="KW-0831">Ubiquinone biosynthesis</keyword>
<proteinExistence type="inferred from homology"/>
<comment type="function">
    <text evidence="1">O-methyltransferase that catalyzes the 2 O-methylation steps in the ubiquinone biosynthetic pathway.</text>
</comment>
<comment type="catalytic activity">
    <reaction evidence="1">
        <text>a 3-demethylubiquinol + S-adenosyl-L-methionine = a ubiquinol + S-adenosyl-L-homocysteine + H(+)</text>
        <dbReference type="Rhea" id="RHEA:44380"/>
        <dbReference type="Rhea" id="RHEA-COMP:9566"/>
        <dbReference type="Rhea" id="RHEA-COMP:10914"/>
        <dbReference type="ChEBI" id="CHEBI:15378"/>
        <dbReference type="ChEBI" id="CHEBI:17976"/>
        <dbReference type="ChEBI" id="CHEBI:57856"/>
        <dbReference type="ChEBI" id="CHEBI:59789"/>
        <dbReference type="ChEBI" id="CHEBI:84422"/>
        <dbReference type="EC" id="2.1.1.64"/>
    </reaction>
</comment>
<comment type="catalytic activity">
    <reaction evidence="1">
        <text>a 3-(all-trans-polyprenyl)benzene-1,2-diol + S-adenosyl-L-methionine = a 2-methoxy-6-(all-trans-polyprenyl)phenol + S-adenosyl-L-homocysteine + H(+)</text>
        <dbReference type="Rhea" id="RHEA:31411"/>
        <dbReference type="Rhea" id="RHEA-COMP:9550"/>
        <dbReference type="Rhea" id="RHEA-COMP:9551"/>
        <dbReference type="ChEBI" id="CHEBI:15378"/>
        <dbReference type="ChEBI" id="CHEBI:57856"/>
        <dbReference type="ChEBI" id="CHEBI:59789"/>
        <dbReference type="ChEBI" id="CHEBI:62729"/>
        <dbReference type="ChEBI" id="CHEBI:62731"/>
        <dbReference type="EC" id="2.1.1.222"/>
    </reaction>
</comment>
<comment type="pathway">
    <text evidence="1">Cofactor biosynthesis; ubiquinone biosynthesis.</text>
</comment>
<comment type="similarity">
    <text evidence="1">Belongs to the methyltransferase superfamily. UbiG/COQ3 family.</text>
</comment>
<feature type="chain" id="PRO_1000013930" description="Ubiquinone biosynthesis O-methyltransferase">
    <location>
        <begin position="1"/>
        <end position="248"/>
    </location>
</feature>
<feature type="binding site" evidence="1">
    <location>
        <position position="41"/>
    </location>
    <ligand>
        <name>S-adenosyl-L-methionine</name>
        <dbReference type="ChEBI" id="CHEBI:59789"/>
    </ligand>
</feature>
<feature type="binding site" evidence="1">
    <location>
        <position position="72"/>
    </location>
    <ligand>
        <name>S-adenosyl-L-methionine</name>
        <dbReference type="ChEBI" id="CHEBI:59789"/>
    </ligand>
</feature>
<feature type="binding site" evidence="1">
    <location>
        <position position="93"/>
    </location>
    <ligand>
        <name>S-adenosyl-L-methionine</name>
        <dbReference type="ChEBI" id="CHEBI:59789"/>
    </ligand>
</feature>
<feature type="binding site" evidence="1">
    <location>
        <position position="136"/>
    </location>
    <ligand>
        <name>S-adenosyl-L-methionine</name>
        <dbReference type="ChEBI" id="CHEBI:59789"/>
    </ligand>
</feature>
<gene>
    <name evidence="1" type="primary">ubiG</name>
    <name type="ordered locus">Smed_2506</name>
</gene>
<sequence length="248" mass="27461">MSETARTTIDQSEVDRFSAMAAEWWDPTGKFRPLHKFNPVRLAYIRDRVAEHFGRDPKSRQPLEGLRLLDIGCGGGLLCEPMARMGADVLGADASEKNIGIARTHAAGSGVRVDYRAVTAEALAEAGESFDVVLNMEVVEHVADVDFFMTTCAHMVRPGGMMFVATINRTLKAAALAIFAAENVLRWLPRGTHQYEKLVRPEEIENPLVASGLEIADRTGVFFNPLSNQWNLSKDMDVNYMIVAKRPI</sequence>
<name>UBIG_SINMW</name>